<feature type="chain" id="PRO_0000305840" description="Bifunctional protein FolD">
    <location>
        <begin position="1"/>
        <end position="286"/>
    </location>
</feature>
<feature type="binding site" evidence="1">
    <location>
        <begin position="166"/>
        <end position="168"/>
    </location>
    <ligand>
        <name>NADP(+)</name>
        <dbReference type="ChEBI" id="CHEBI:58349"/>
    </ligand>
</feature>
<feature type="binding site" evidence="1">
    <location>
        <position position="232"/>
    </location>
    <ligand>
        <name>NADP(+)</name>
        <dbReference type="ChEBI" id="CHEBI:58349"/>
    </ligand>
</feature>
<dbReference type="EC" id="1.5.1.5" evidence="1"/>
<dbReference type="EC" id="3.5.4.9" evidence="1"/>
<dbReference type="EMBL" id="CP000514">
    <property type="protein sequence ID" value="ABM18924.1"/>
    <property type="status" value="ALT_INIT"/>
    <property type="molecule type" value="Genomic_DNA"/>
</dbReference>
<dbReference type="RefSeq" id="WP_014421154.1">
    <property type="nucleotide sequence ID" value="NC_008740.1"/>
</dbReference>
<dbReference type="SMR" id="A1U1Q5"/>
<dbReference type="STRING" id="351348.Maqu_1842"/>
<dbReference type="GeneID" id="31820927"/>
<dbReference type="KEGG" id="maq:Maqu_1842"/>
<dbReference type="eggNOG" id="COG0190">
    <property type="taxonomic scope" value="Bacteria"/>
</dbReference>
<dbReference type="HOGENOM" id="CLU_034045_2_1_6"/>
<dbReference type="OrthoDB" id="9803580at2"/>
<dbReference type="UniPathway" id="UPA00193"/>
<dbReference type="Proteomes" id="UP000000998">
    <property type="component" value="Chromosome"/>
</dbReference>
<dbReference type="GO" id="GO:0005829">
    <property type="term" value="C:cytosol"/>
    <property type="evidence" value="ECO:0007669"/>
    <property type="project" value="TreeGrafter"/>
</dbReference>
<dbReference type="GO" id="GO:0004477">
    <property type="term" value="F:methenyltetrahydrofolate cyclohydrolase activity"/>
    <property type="evidence" value="ECO:0007669"/>
    <property type="project" value="UniProtKB-UniRule"/>
</dbReference>
<dbReference type="GO" id="GO:0004488">
    <property type="term" value="F:methylenetetrahydrofolate dehydrogenase (NADP+) activity"/>
    <property type="evidence" value="ECO:0007669"/>
    <property type="project" value="UniProtKB-UniRule"/>
</dbReference>
<dbReference type="GO" id="GO:0000105">
    <property type="term" value="P:L-histidine biosynthetic process"/>
    <property type="evidence" value="ECO:0007669"/>
    <property type="project" value="UniProtKB-KW"/>
</dbReference>
<dbReference type="GO" id="GO:0009086">
    <property type="term" value="P:methionine biosynthetic process"/>
    <property type="evidence" value="ECO:0007669"/>
    <property type="project" value="UniProtKB-KW"/>
</dbReference>
<dbReference type="GO" id="GO:0006164">
    <property type="term" value="P:purine nucleotide biosynthetic process"/>
    <property type="evidence" value="ECO:0007669"/>
    <property type="project" value="UniProtKB-KW"/>
</dbReference>
<dbReference type="GO" id="GO:0035999">
    <property type="term" value="P:tetrahydrofolate interconversion"/>
    <property type="evidence" value="ECO:0007669"/>
    <property type="project" value="UniProtKB-UniRule"/>
</dbReference>
<dbReference type="CDD" id="cd01080">
    <property type="entry name" value="NAD_bind_m-THF_DH_Cyclohyd"/>
    <property type="match status" value="1"/>
</dbReference>
<dbReference type="FunFam" id="3.40.50.10860:FF:000001">
    <property type="entry name" value="Bifunctional protein FolD"/>
    <property type="match status" value="1"/>
</dbReference>
<dbReference type="FunFam" id="3.40.50.720:FF:000006">
    <property type="entry name" value="Bifunctional protein FolD"/>
    <property type="match status" value="1"/>
</dbReference>
<dbReference type="Gene3D" id="3.40.50.10860">
    <property type="entry name" value="Leucine Dehydrogenase, chain A, domain 1"/>
    <property type="match status" value="1"/>
</dbReference>
<dbReference type="Gene3D" id="3.40.50.720">
    <property type="entry name" value="NAD(P)-binding Rossmann-like Domain"/>
    <property type="match status" value="1"/>
</dbReference>
<dbReference type="HAMAP" id="MF_01576">
    <property type="entry name" value="THF_DHG_CYH"/>
    <property type="match status" value="1"/>
</dbReference>
<dbReference type="InterPro" id="IPR046346">
    <property type="entry name" value="Aminoacid_DH-like_N_sf"/>
</dbReference>
<dbReference type="InterPro" id="IPR036291">
    <property type="entry name" value="NAD(P)-bd_dom_sf"/>
</dbReference>
<dbReference type="InterPro" id="IPR000672">
    <property type="entry name" value="THF_DH/CycHdrlase"/>
</dbReference>
<dbReference type="InterPro" id="IPR020630">
    <property type="entry name" value="THF_DH/CycHdrlase_cat_dom"/>
</dbReference>
<dbReference type="InterPro" id="IPR020867">
    <property type="entry name" value="THF_DH/CycHdrlase_CS"/>
</dbReference>
<dbReference type="InterPro" id="IPR020631">
    <property type="entry name" value="THF_DH/CycHdrlase_NAD-bd_dom"/>
</dbReference>
<dbReference type="NCBIfam" id="NF008058">
    <property type="entry name" value="PRK10792.1"/>
    <property type="match status" value="1"/>
</dbReference>
<dbReference type="NCBIfam" id="NF010783">
    <property type="entry name" value="PRK14186.1"/>
    <property type="match status" value="1"/>
</dbReference>
<dbReference type="PANTHER" id="PTHR48099:SF5">
    <property type="entry name" value="C-1-TETRAHYDROFOLATE SYNTHASE, CYTOPLASMIC"/>
    <property type="match status" value="1"/>
</dbReference>
<dbReference type="PANTHER" id="PTHR48099">
    <property type="entry name" value="C-1-TETRAHYDROFOLATE SYNTHASE, CYTOPLASMIC-RELATED"/>
    <property type="match status" value="1"/>
</dbReference>
<dbReference type="Pfam" id="PF00763">
    <property type="entry name" value="THF_DHG_CYH"/>
    <property type="match status" value="1"/>
</dbReference>
<dbReference type="Pfam" id="PF02882">
    <property type="entry name" value="THF_DHG_CYH_C"/>
    <property type="match status" value="1"/>
</dbReference>
<dbReference type="PRINTS" id="PR00085">
    <property type="entry name" value="THFDHDRGNASE"/>
</dbReference>
<dbReference type="SUPFAM" id="SSF53223">
    <property type="entry name" value="Aminoacid dehydrogenase-like, N-terminal domain"/>
    <property type="match status" value="1"/>
</dbReference>
<dbReference type="SUPFAM" id="SSF51735">
    <property type="entry name" value="NAD(P)-binding Rossmann-fold domains"/>
    <property type="match status" value="1"/>
</dbReference>
<dbReference type="PROSITE" id="PS00767">
    <property type="entry name" value="THF_DHG_CYH_2"/>
    <property type="match status" value="1"/>
</dbReference>
<comment type="function">
    <text evidence="1">Catalyzes the oxidation of 5,10-methylenetetrahydrofolate to 5,10-methenyltetrahydrofolate and then the hydrolysis of 5,10-methenyltetrahydrofolate to 10-formyltetrahydrofolate.</text>
</comment>
<comment type="catalytic activity">
    <reaction evidence="1">
        <text>(6R)-5,10-methylene-5,6,7,8-tetrahydrofolate + NADP(+) = (6R)-5,10-methenyltetrahydrofolate + NADPH</text>
        <dbReference type="Rhea" id="RHEA:22812"/>
        <dbReference type="ChEBI" id="CHEBI:15636"/>
        <dbReference type="ChEBI" id="CHEBI:57455"/>
        <dbReference type="ChEBI" id="CHEBI:57783"/>
        <dbReference type="ChEBI" id="CHEBI:58349"/>
        <dbReference type="EC" id="1.5.1.5"/>
    </reaction>
</comment>
<comment type="catalytic activity">
    <reaction evidence="1">
        <text>(6R)-5,10-methenyltetrahydrofolate + H2O = (6R)-10-formyltetrahydrofolate + H(+)</text>
        <dbReference type="Rhea" id="RHEA:23700"/>
        <dbReference type="ChEBI" id="CHEBI:15377"/>
        <dbReference type="ChEBI" id="CHEBI:15378"/>
        <dbReference type="ChEBI" id="CHEBI:57455"/>
        <dbReference type="ChEBI" id="CHEBI:195366"/>
        <dbReference type="EC" id="3.5.4.9"/>
    </reaction>
</comment>
<comment type="pathway">
    <text evidence="1">One-carbon metabolism; tetrahydrofolate interconversion.</text>
</comment>
<comment type="subunit">
    <text evidence="1">Homodimer.</text>
</comment>
<comment type="similarity">
    <text evidence="1">Belongs to the tetrahydrofolate dehydrogenase/cyclohydrolase family.</text>
</comment>
<comment type="sequence caution" evidence="2">
    <conflict type="erroneous initiation">
        <sequence resource="EMBL-CDS" id="ABM18924"/>
    </conflict>
</comment>
<keyword id="KW-0028">Amino-acid biosynthesis</keyword>
<keyword id="KW-0368">Histidine biosynthesis</keyword>
<keyword id="KW-0378">Hydrolase</keyword>
<keyword id="KW-0486">Methionine biosynthesis</keyword>
<keyword id="KW-0511">Multifunctional enzyme</keyword>
<keyword id="KW-0521">NADP</keyword>
<keyword id="KW-0554">One-carbon metabolism</keyword>
<keyword id="KW-0560">Oxidoreductase</keyword>
<keyword id="KW-0658">Purine biosynthesis</keyword>
<organism>
    <name type="scientific">Marinobacter nauticus (strain ATCC 700491 / DSM 11845 / VT8)</name>
    <name type="common">Marinobacter aquaeolei</name>
    <dbReference type="NCBI Taxonomy" id="351348"/>
    <lineage>
        <taxon>Bacteria</taxon>
        <taxon>Pseudomonadati</taxon>
        <taxon>Pseudomonadota</taxon>
        <taxon>Gammaproteobacteria</taxon>
        <taxon>Pseudomonadales</taxon>
        <taxon>Marinobacteraceae</taxon>
        <taxon>Marinobacter</taxon>
    </lineage>
</organism>
<reference key="1">
    <citation type="journal article" date="2011" name="Appl. Environ. Microbiol.">
        <title>Genomic potential of Marinobacter aquaeolei, a biogeochemical 'opportunitroph'.</title>
        <authorList>
            <person name="Singer E."/>
            <person name="Webb E.A."/>
            <person name="Nelson W.C."/>
            <person name="Heidelberg J.F."/>
            <person name="Ivanova N."/>
            <person name="Pati A."/>
            <person name="Edwards K.J."/>
        </authorList>
    </citation>
    <scope>NUCLEOTIDE SEQUENCE [LARGE SCALE GENOMIC DNA]</scope>
    <source>
        <strain>ATCC 700491 / DSM 11845 / VT8</strain>
    </source>
</reference>
<gene>
    <name evidence="1" type="primary">folD</name>
    <name type="ordered locus">Maqu_1842</name>
</gene>
<sequence>MSAKLINGKEIAAQVRQQVAAGVEARKQKGLRAPGLAVVLVGHDPASQVYVGNKRKACEQAGILSLSYDLPEDTSQAALEALVDELNENPAVDGILVQLPLPSHLDADPILVKIRPDKDVDGFHPYNIGRLMQRKPTLRPCTPAGVITLLDSIGTPYKGQHAVIVGASNIVGRPMSMELLLKGATTTVCHRFTDNLEKFVGEADILVAAVGKPGIIKGEWVKPGATVIDVGINRMDDGKLCGDVDFDAAAERAAYITPVPGGVGPMTIATLLENTLYAANVLHADT</sequence>
<name>FOLD_MARN8</name>
<accession>A1U1Q5</accession>
<evidence type="ECO:0000255" key="1">
    <source>
        <dbReference type="HAMAP-Rule" id="MF_01576"/>
    </source>
</evidence>
<evidence type="ECO:0000305" key="2"/>
<protein>
    <recommendedName>
        <fullName evidence="1">Bifunctional protein FolD</fullName>
    </recommendedName>
    <domain>
        <recommendedName>
            <fullName evidence="1">Methylenetetrahydrofolate dehydrogenase</fullName>
            <ecNumber evidence="1">1.5.1.5</ecNumber>
        </recommendedName>
    </domain>
    <domain>
        <recommendedName>
            <fullName evidence="1">Methenyltetrahydrofolate cyclohydrolase</fullName>
            <ecNumber evidence="1">3.5.4.9</ecNumber>
        </recommendedName>
    </domain>
</protein>
<proteinExistence type="inferred from homology"/>